<name>RBL_NOLSP</name>
<geneLocation type="chloroplast"/>
<evidence type="ECO:0000255" key="1">
    <source>
        <dbReference type="HAMAP-Rule" id="MF_01338"/>
    </source>
</evidence>
<proteinExistence type="inferred from homology"/>
<keyword id="KW-0113">Calvin cycle</keyword>
<keyword id="KW-0120">Carbon dioxide fixation</keyword>
<keyword id="KW-0150">Chloroplast</keyword>
<keyword id="KW-1015">Disulfide bond</keyword>
<keyword id="KW-0456">Lyase</keyword>
<keyword id="KW-0460">Magnesium</keyword>
<keyword id="KW-0479">Metal-binding</keyword>
<keyword id="KW-0488">Methylation</keyword>
<keyword id="KW-0503">Monooxygenase</keyword>
<keyword id="KW-0560">Oxidoreductase</keyword>
<keyword id="KW-0601">Photorespiration</keyword>
<keyword id="KW-0602">Photosynthesis</keyword>
<keyword id="KW-0934">Plastid</keyword>
<reference key="1">
    <citation type="journal article" date="1994" name="Syst. Biol.">
        <title>Combining data in phylogenetic systematics: an empirical approach using three molecular data sets in the Solanaceae.</title>
        <authorList>
            <person name="Olmstead R.G."/>
            <person name="Sweere J.A."/>
        </authorList>
    </citation>
    <scope>NUCLEOTIDE SEQUENCE [GENOMIC DNA]</scope>
</reference>
<sequence>SVGFKAGVKEYKLTYYTPEYQTKDTDILAAFRVTPQPGVPPEEAGAAVAAESSTGTWTTVWTDGLTSLDRYKGRCYRIERVVGEKDQYIAYVAYPLDLFEEGSVTNMFTSIVGNVFGFKALRALRLEDLRIPPAYVKTFQGPPHGIQVERDKLNKYGRPLLGCTIKPKLGLSAKNYGRAVYECLRGGLDFTKDDENVNSQPFMRWRDRFLFCAEALYKAQAETGEIKGHYLNATAGTCEEMIKRAVFARELGVPIVMHDYLTGGFTANTSLAHYCRDNGLLLHIHRAMHAVIDRQKNHGIHFRVLAKALRMSGGDHIHSGTVVGKLEGERDITLGFVDLLRDDFVEQDRSRGIYFTQDWVSLPGVLPVASGGIHVWHMPALTEIFGDDSVLQFGGGTLGHPWGNAPGAVANRVALEACVKARNEGRDLAQEGNQIIREACKWSPELAAACEVWKEIVFNFAAVDVLDK</sequence>
<comment type="function">
    <text evidence="1">RuBisCO catalyzes two reactions: the carboxylation of D-ribulose 1,5-bisphosphate, the primary event in carbon dioxide fixation, as well as the oxidative fragmentation of the pentose substrate in the photorespiration process. Both reactions occur simultaneously and in competition at the same active site.</text>
</comment>
<comment type="catalytic activity">
    <reaction evidence="1">
        <text>2 (2R)-3-phosphoglycerate + 2 H(+) = D-ribulose 1,5-bisphosphate + CO2 + H2O</text>
        <dbReference type="Rhea" id="RHEA:23124"/>
        <dbReference type="ChEBI" id="CHEBI:15377"/>
        <dbReference type="ChEBI" id="CHEBI:15378"/>
        <dbReference type="ChEBI" id="CHEBI:16526"/>
        <dbReference type="ChEBI" id="CHEBI:57870"/>
        <dbReference type="ChEBI" id="CHEBI:58272"/>
        <dbReference type="EC" id="4.1.1.39"/>
    </reaction>
</comment>
<comment type="catalytic activity">
    <reaction evidence="1">
        <text>D-ribulose 1,5-bisphosphate + O2 = 2-phosphoglycolate + (2R)-3-phosphoglycerate + 2 H(+)</text>
        <dbReference type="Rhea" id="RHEA:36631"/>
        <dbReference type="ChEBI" id="CHEBI:15378"/>
        <dbReference type="ChEBI" id="CHEBI:15379"/>
        <dbReference type="ChEBI" id="CHEBI:57870"/>
        <dbReference type="ChEBI" id="CHEBI:58033"/>
        <dbReference type="ChEBI" id="CHEBI:58272"/>
    </reaction>
</comment>
<comment type="cofactor">
    <cofactor evidence="1">
        <name>Mg(2+)</name>
        <dbReference type="ChEBI" id="CHEBI:18420"/>
    </cofactor>
    <text evidence="1">Binds 1 Mg(2+) ion per subunit.</text>
</comment>
<comment type="subunit">
    <text evidence="1">Heterohexadecamer of 8 large chains and 8 small chains; disulfide-linked. The disulfide link is formed within the large subunit homodimers.</text>
</comment>
<comment type="subcellular location">
    <subcellularLocation>
        <location>Plastid</location>
        <location>Chloroplast</location>
    </subcellularLocation>
</comment>
<comment type="PTM">
    <text evidence="1">The disulfide bond which can form in the large chain dimeric partners within the hexadecamer appears to be associated with oxidative stress and protein turnover.</text>
</comment>
<comment type="miscellaneous">
    <text evidence="1">The basic functional RuBisCO is composed of a large chain homodimer in a 'head-to-tail' conformation. In form I RuBisCO this homodimer is arranged in a barrel-like tetramer with the small subunits forming a tetrameric 'cap' on each end of the 'barrel'.</text>
</comment>
<comment type="similarity">
    <text evidence="1">Belongs to the RuBisCO large chain family. Type I subfamily.</text>
</comment>
<protein>
    <recommendedName>
        <fullName evidence="1">Ribulose bisphosphate carboxylase large chain</fullName>
        <shortName evidence="1">RuBisCO large subunit</shortName>
        <ecNumber evidence="1">4.1.1.39</ecNumber>
    </recommendedName>
</protein>
<organism>
    <name type="scientific">Nolana spathulata</name>
    <name type="common">Chilean bell flower</name>
    <name type="synonym">Nolana humifusa subsp. spathulata</name>
    <dbReference type="NCBI Taxonomy" id="33124"/>
    <lineage>
        <taxon>Eukaryota</taxon>
        <taxon>Viridiplantae</taxon>
        <taxon>Streptophyta</taxon>
        <taxon>Embryophyta</taxon>
        <taxon>Tracheophyta</taxon>
        <taxon>Spermatophyta</taxon>
        <taxon>Magnoliopsida</taxon>
        <taxon>eudicotyledons</taxon>
        <taxon>Gunneridae</taxon>
        <taxon>Pentapetalae</taxon>
        <taxon>asterids</taxon>
        <taxon>lamiids</taxon>
        <taxon>Solanales</taxon>
        <taxon>Solanaceae</taxon>
        <taxon>Solanoideae</taxon>
        <taxon>Nolaneae</taxon>
        <taxon>Nolana</taxon>
    </lineage>
</organism>
<gene>
    <name evidence="1" type="primary">rbcL</name>
</gene>
<accession>Q32699</accession>
<feature type="chain" id="PRO_0000062541" description="Ribulose bisphosphate carboxylase large chain">
    <location>
        <begin position="1" status="less than"/>
        <end position="468"/>
    </location>
</feature>
<feature type="active site" description="Proton acceptor" evidence="1">
    <location>
        <position position="166"/>
    </location>
</feature>
<feature type="active site" description="Proton acceptor" evidence="1">
    <location>
        <position position="285"/>
    </location>
</feature>
<feature type="binding site" description="in homodimeric partner" evidence="1">
    <location>
        <position position="114"/>
    </location>
    <ligand>
        <name>substrate</name>
    </ligand>
</feature>
<feature type="binding site" evidence="1">
    <location>
        <position position="164"/>
    </location>
    <ligand>
        <name>substrate</name>
    </ligand>
</feature>
<feature type="binding site" evidence="1">
    <location>
        <position position="168"/>
    </location>
    <ligand>
        <name>substrate</name>
    </ligand>
</feature>
<feature type="binding site" description="via carbamate group" evidence="1">
    <location>
        <position position="192"/>
    </location>
    <ligand>
        <name>Mg(2+)</name>
        <dbReference type="ChEBI" id="CHEBI:18420"/>
    </ligand>
</feature>
<feature type="binding site" evidence="1">
    <location>
        <position position="194"/>
    </location>
    <ligand>
        <name>Mg(2+)</name>
        <dbReference type="ChEBI" id="CHEBI:18420"/>
    </ligand>
</feature>
<feature type="binding site" evidence="1">
    <location>
        <position position="195"/>
    </location>
    <ligand>
        <name>Mg(2+)</name>
        <dbReference type="ChEBI" id="CHEBI:18420"/>
    </ligand>
</feature>
<feature type="binding site" evidence="1">
    <location>
        <position position="286"/>
    </location>
    <ligand>
        <name>substrate</name>
    </ligand>
</feature>
<feature type="binding site" evidence="1">
    <location>
        <position position="318"/>
    </location>
    <ligand>
        <name>substrate</name>
    </ligand>
</feature>
<feature type="binding site" evidence="1">
    <location>
        <position position="370"/>
    </location>
    <ligand>
        <name>substrate</name>
    </ligand>
</feature>
<feature type="site" description="Transition state stabilizer" evidence="1">
    <location>
        <position position="325"/>
    </location>
</feature>
<feature type="modified residue" description="N6,N6,N6-trimethyllysine" evidence="1">
    <location>
        <position position="5"/>
    </location>
</feature>
<feature type="modified residue" description="N6-carboxylysine" evidence="1">
    <location>
        <position position="192"/>
    </location>
</feature>
<feature type="disulfide bond" description="Interchain; in linked form" evidence="1">
    <location>
        <position position="238"/>
    </location>
</feature>
<feature type="non-terminal residue">
    <location>
        <position position="1"/>
    </location>
</feature>
<dbReference type="EC" id="4.1.1.39" evidence="1"/>
<dbReference type="EMBL" id="U08616">
    <property type="protein sequence ID" value="AAA18391.1"/>
    <property type="molecule type" value="Genomic_DNA"/>
</dbReference>
<dbReference type="SMR" id="Q32699"/>
<dbReference type="GO" id="GO:0009507">
    <property type="term" value="C:chloroplast"/>
    <property type="evidence" value="ECO:0007669"/>
    <property type="project" value="UniProtKB-SubCell"/>
</dbReference>
<dbReference type="GO" id="GO:0000287">
    <property type="term" value="F:magnesium ion binding"/>
    <property type="evidence" value="ECO:0007669"/>
    <property type="project" value="InterPro"/>
</dbReference>
<dbReference type="GO" id="GO:0004497">
    <property type="term" value="F:monooxygenase activity"/>
    <property type="evidence" value="ECO:0007669"/>
    <property type="project" value="UniProtKB-KW"/>
</dbReference>
<dbReference type="GO" id="GO:0016984">
    <property type="term" value="F:ribulose-bisphosphate carboxylase activity"/>
    <property type="evidence" value="ECO:0007669"/>
    <property type="project" value="UniProtKB-EC"/>
</dbReference>
<dbReference type="GO" id="GO:0009853">
    <property type="term" value="P:photorespiration"/>
    <property type="evidence" value="ECO:0007669"/>
    <property type="project" value="UniProtKB-KW"/>
</dbReference>
<dbReference type="GO" id="GO:0019253">
    <property type="term" value="P:reductive pentose-phosphate cycle"/>
    <property type="evidence" value="ECO:0007669"/>
    <property type="project" value="UniProtKB-KW"/>
</dbReference>
<dbReference type="CDD" id="cd08212">
    <property type="entry name" value="RuBisCO_large_I"/>
    <property type="match status" value="1"/>
</dbReference>
<dbReference type="FunFam" id="3.20.20.110:FF:000001">
    <property type="entry name" value="Ribulose bisphosphate carboxylase large chain"/>
    <property type="match status" value="1"/>
</dbReference>
<dbReference type="FunFam" id="3.30.70.150:FF:000001">
    <property type="entry name" value="Ribulose bisphosphate carboxylase large chain"/>
    <property type="match status" value="1"/>
</dbReference>
<dbReference type="Gene3D" id="3.20.20.110">
    <property type="entry name" value="Ribulose bisphosphate carboxylase, large subunit, C-terminal domain"/>
    <property type="match status" value="1"/>
</dbReference>
<dbReference type="Gene3D" id="3.30.70.150">
    <property type="entry name" value="RuBisCO large subunit, N-terminal domain"/>
    <property type="match status" value="1"/>
</dbReference>
<dbReference type="HAMAP" id="MF_01338">
    <property type="entry name" value="RuBisCO_L_type1"/>
    <property type="match status" value="1"/>
</dbReference>
<dbReference type="InterPro" id="IPR033966">
    <property type="entry name" value="RuBisCO"/>
</dbReference>
<dbReference type="InterPro" id="IPR020878">
    <property type="entry name" value="RuBisCo_large_chain_AS"/>
</dbReference>
<dbReference type="InterPro" id="IPR000685">
    <property type="entry name" value="RuBisCO_lsu_C"/>
</dbReference>
<dbReference type="InterPro" id="IPR036376">
    <property type="entry name" value="RuBisCO_lsu_C_sf"/>
</dbReference>
<dbReference type="InterPro" id="IPR017443">
    <property type="entry name" value="RuBisCO_lsu_fd_N"/>
</dbReference>
<dbReference type="InterPro" id="IPR036422">
    <property type="entry name" value="RuBisCO_lsu_N_sf"/>
</dbReference>
<dbReference type="InterPro" id="IPR020888">
    <property type="entry name" value="RuBisCO_lsuI"/>
</dbReference>
<dbReference type="NCBIfam" id="NF003252">
    <property type="entry name" value="PRK04208.1"/>
    <property type="match status" value="1"/>
</dbReference>
<dbReference type="PANTHER" id="PTHR42704">
    <property type="entry name" value="RIBULOSE BISPHOSPHATE CARBOXYLASE"/>
    <property type="match status" value="1"/>
</dbReference>
<dbReference type="PANTHER" id="PTHR42704:SF16">
    <property type="entry name" value="RIBULOSE BISPHOSPHATE CARBOXYLASE LARGE CHAIN"/>
    <property type="match status" value="1"/>
</dbReference>
<dbReference type="Pfam" id="PF00016">
    <property type="entry name" value="RuBisCO_large"/>
    <property type="match status" value="1"/>
</dbReference>
<dbReference type="Pfam" id="PF02788">
    <property type="entry name" value="RuBisCO_large_N"/>
    <property type="match status" value="1"/>
</dbReference>
<dbReference type="SFLD" id="SFLDG01052">
    <property type="entry name" value="RuBisCO"/>
    <property type="match status" value="1"/>
</dbReference>
<dbReference type="SFLD" id="SFLDS00014">
    <property type="entry name" value="RuBisCO"/>
    <property type="match status" value="1"/>
</dbReference>
<dbReference type="SFLD" id="SFLDG00301">
    <property type="entry name" value="RuBisCO-like_proteins"/>
    <property type="match status" value="1"/>
</dbReference>
<dbReference type="SUPFAM" id="SSF51649">
    <property type="entry name" value="RuBisCo, C-terminal domain"/>
    <property type="match status" value="1"/>
</dbReference>
<dbReference type="SUPFAM" id="SSF54966">
    <property type="entry name" value="RuBisCO, large subunit, small (N-terminal) domain"/>
    <property type="match status" value="1"/>
</dbReference>
<dbReference type="PROSITE" id="PS00157">
    <property type="entry name" value="RUBISCO_LARGE"/>
    <property type="match status" value="1"/>
</dbReference>